<accession>Q0HF31</accession>
<organism>
    <name type="scientific">Shewanella sp. (strain MR-4)</name>
    <dbReference type="NCBI Taxonomy" id="60480"/>
    <lineage>
        <taxon>Bacteria</taxon>
        <taxon>Pseudomonadati</taxon>
        <taxon>Pseudomonadota</taxon>
        <taxon>Gammaproteobacteria</taxon>
        <taxon>Alteromonadales</taxon>
        <taxon>Shewanellaceae</taxon>
        <taxon>Shewanella</taxon>
    </lineage>
</organism>
<evidence type="ECO:0000255" key="1">
    <source>
        <dbReference type="HAMAP-Rule" id="MF_00532"/>
    </source>
</evidence>
<evidence type="ECO:0000305" key="2"/>
<dbReference type="EMBL" id="CP000446">
    <property type="protein sequence ID" value="ABI40336.1"/>
    <property type="molecule type" value="Genomic_DNA"/>
</dbReference>
<dbReference type="RefSeq" id="WP_006083052.1">
    <property type="nucleotide sequence ID" value="NC_008321.1"/>
</dbReference>
<dbReference type="SMR" id="Q0HF31"/>
<dbReference type="GeneID" id="94726683"/>
<dbReference type="KEGG" id="she:Shewmr4_3268"/>
<dbReference type="HOGENOM" id="CLU_046483_2_1_6"/>
<dbReference type="GO" id="GO:0022627">
    <property type="term" value="C:cytosolic small ribosomal subunit"/>
    <property type="evidence" value="ECO:0007669"/>
    <property type="project" value="TreeGrafter"/>
</dbReference>
<dbReference type="GO" id="GO:0003723">
    <property type="term" value="F:RNA binding"/>
    <property type="evidence" value="ECO:0007669"/>
    <property type="project" value="TreeGrafter"/>
</dbReference>
<dbReference type="GO" id="GO:0003735">
    <property type="term" value="F:structural constituent of ribosome"/>
    <property type="evidence" value="ECO:0007669"/>
    <property type="project" value="InterPro"/>
</dbReference>
<dbReference type="GO" id="GO:0006412">
    <property type="term" value="P:translation"/>
    <property type="evidence" value="ECO:0007669"/>
    <property type="project" value="UniProtKB-UniRule"/>
</dbReference>
<dbReference type="FunFam" id="3.30.230.10:FF:000001">
    <property type="entry name" value="30S ribosomal protein S9"/>
    <property type="match status" value="1"/>
</dbReference>
<dbReference type="Gene3D" id="3.30.230.10">
    <property type="match status" value="1"/>
</dbReference>
<dbReference type="HAMAP" id="MF_00532_B">
    <property type="entry name" value="Ribosomal_uS9_B"/>
    <property type="match status" value="1"/>
</dbReference>
<dbReference type="InterPro" id="IPR020568">
    <property type="entry name" value="Ribosomal_Su5_D2-typ_SF"/>
</dbReference>
<dbReference type="InterPro" id="IPR000754">
    <property type="entry name" value="Ribosomal_uS9"/>
</dbReference>
<dbReference type="InterPro" id="IPR023035">
    <property type="entry name" value="Ribosomal_uS9_bac/plastid"/>
</dbReference>
<dbReference type="InterPro" id="IPR020574">
    <property type="entry name" value="Ribosomal_uS9_CS"/>
</dbReference>
<dbReference type="InterPro" id="IPR014721">
    <property type="entry name" value="Ribsml_uS5_D2-typ_fold_subgr"/>
</dbReference>
<dbReference type="NCBIfam" id="NF001099">
    <property type="entry name" value="PRK00132.1"/>
    <property type="match status" value="1"/>
</dbReference>
<dbReference type="PANTHER" id="PTHR21569">
    <property type="entry name" value="RIBOSOMAL PROTEIN S9"/>
    <property type="match status" value="1"/>
</dbReference>
<dbReference type="PANTHER" id="PTHR21569:SF1">
    <property type="entry name" value="SMALL RIBOSOMAL SUBUNIT PROTEIN US9M"/>
    <property type="match status" value="1"/>
</dbReference>
<dbReference type="Pfam" id="PF00380">
    <property type="entry name" value="Ribosomal_S9"/>
    <property type="match status" value="1"/>
</dbReference>
<dbReference type="SUPFAM" id="SSF54211">
    <property type="entry name" value="Ribosomal protein S5 domain 2-like"/>
    <property type="match status" value="1"/>
</dbReference>
<dbReference type="PROSITE" id="PS00360">
    <property type="entry name" value="RIBOSOMAL_S9"/>
    <property type="match status" value="1"/>
</dbReference>
<feature type="chain" id="PRO_1000051325" description="Small ribosomal subunit protein uS9">
    <location>
        <begin position="1"/>
        <end position="130"/>
    </location>
</feature>
<protein>
    <recommendedName>
        <fullName evidence="1">Small ribosomal subunit protein uS9</fullName>
    </recommendedName>
    <alternativeName>
        <fullName evidence="2">30S ribosomal protein S9</fullName>
    </alternativeName>
</protein>
<reference key="1">
    <citation type="submission" date="2006-08" db="EMBL/GenBank/DDBJ databases">
        <title>Complete sequence of Shewanella sp. MR-4.</title>
        <authorList>
            <consortium name="US DOE Joint Genome Institute"/>
            <person name="Copeland A."/>
            <person name="Lucas S."/>
            <person name="Lapidus A."/>
            <person name="Barry K."/>
            <person name="Detter J.C."/>
            <person name="Glavina del Rio T."/>
            <person name="Hammon N."/>
            <person name="Israni S."/>
            <person name="Dalin E."/>
            <person name="Tice H."/>
            <person name="Pitluck S."/>
            <person name="Kiss H."/>
            <person name="Brettin T."/>
            <person name="Bruce D."/>
            <person name="Han C."/>
            <person name="Tapia R."/>
            <person name="Gilna P."/>
            <person name="Schmutz J."/>
            <person name="Larimer F."/>
            <person name="Land M."/>
            <person name="Hauser L."/>
            <person name="Kyrpides N."/>
            <person name="Mikhailova N."/>
            <person name="Nealson K."/>
            <person name="Konstantinidis K."/>
            <person name="Klappenbach J."/>
            <person name="Tiedje J."/>
            <person name="Richardson P."/>
        </authorList>
    </citation>
    <scope>NUCLEOTIDE SEQUENCE [LARGE SCALE GENOMIC DNA]</scope>
    <source>
        <strain>MR-4</strain>
    </source>
</reference>
<gene>
    <name evidence="1" type="primary">rpsI</name>
    <name type="ordered locus">Shewmr4_3268</name>
</gene>
<comment type="similarity">
    <text evidence="1">Belongs to the universal ribosomal protein uS9 family.</text>
</comment>
<name>RS9_SHESM</name>
<sequence length="130" mass="14536">MAATQYYGTGRRKTSTARVFAKAGSGNIVVNQRPLDQYFGRETARMVVRQPLELVEMTDKLDIYVTVKGGGITGQAGAIRHGITRALMQLDEALRPSLRSAGFVTRDARKVERKKVGLRKARRKPQFSKR</sequence>
<proteinExistence type="inferred from homology"/>
<keyword id="KW-0687">Ribonucleoprotein</keyword>
<keyword id="KW-0689">Ribosomal protein</keyword>